<comment type="function">
    <text evidence="1">Catalyzes the condensation reaction of fatty acid synthesis by the addition to an acyl acceptor of two carbons from malonyl-ACP. Catalyzes the first condensation reaction which initiates fatty acid synthesis and may therefore play a role in governing the total rate of fatty acid production. Possesses both acetoacetyl-ACP synthase and acetyl transacylase activities. Its substrate specificity determines the biosynthesis of branched-chain and/or straight-chain of fatty acids.</text>
</comment>
<comment type="catalytic activity">
    <reaction evidence="1">
        <text>malonyl-[ACP] + acetyl-CoA + H(+) = 3-oxobutanoyl-[ACP] + CO2 + CoA</text>
        <dbReference type="Rhea" id="RHEA:12080"/>
        <dbReference type="Rhea" id="RHEA-COMP:9623"/>
        <dbReference type="Rhea" id="RHEA-COMP:9625"/>
        <dbReference type="ChEBI" id="CHEBI:15378"/>
        <dbReference type="ChEBI" id="CHEBI:16526"/>
        <dbReference type="ChEBI" id="CHEBI:57287"/>
        <dbReference type="ChEBI" id="CHEBI:57288"/>
        <dbReference type="ChEBI" id="CHEBI:78449"/>
        <dbReference type="ChEBI" id="CHEBI:78450"/>
        <dbReference type="EC" id="2.3.1.180"/>
    </reaction>
</comment>
<comment type="pathway">
    <text evidence="1">Lipid metabolism; fatty acid biosynthesis.</text>
</comment>
<comment type="subunit">
    <text evidence="1">Homodimer.</text>
</comment>
<comment type="subcellular location">
    <subcellularLocation>
        <location evidence="1">Cytoplasm</location>
    </subcellularLocation>
</comment>
<comment type="domain">
    <text evidence="1">The last Arg residue of the ACP-binding site is essential for the weak association between ACP/AcpP and FabH.</text>
</comment>
<comment type="similarity">
    <text evidence="1">Belongs to the thiolase-like superfamily. FabH family.</text>
</comment>
<evidence type="ECO:0000255" key="1">
    <source>
        <dbReference type="HAMAP-Rule" id="MF_01815"/>
    </source>
</evidence>
<protein>
    <recommendedName>
        <fullName evidence="1">Beta-ketoacyl-[acyl-carrier-protein] synthase III</fullName>
        <shortName evidence="1">Beta-ketoacyl-ACP synthase III</shortName>
        <shortName evidence="1">KAS III</shortName>
        <ecNumber evidence="1">2.3.1.180</ecNumber>
    </recommendedName>
    <alternativeName>
        <fullName evidence="1">3-oxoacyl-[acyl-carrier-protein] synthase 3</fullName>
    </alternativeName>
    <alternativeName>
        <fullName evidence="1">3-oxoacyl-[acyl-carrier-protein] synthase III</fullName>
    </alternativeName>
</protein>
<gene>
    <name evidence="1" type="primary">fabH</name>
    <name type="ordered locus">YPTB2473</name>
</gene>
<keyword id="KW-0012">Acyltransferase</keyword>
<keyword id="KW-0963">Cytoplasm</keyword>
<keyword id="KW-0275">Fatty acid biosynthesis</keyword>
<keyword id="KW-0276">Fatty acid metabolism</keyword>
<keyword id="KW-0444">Lipid biosynthesis</keyword>
<keyword id="KW-0443">Lipid metabolism</keyword>
<keyword id="KW-0511">Multifunctional enzyme</keyword>
<keyword id="KW-0808">Transferase</keyword>
<accession>Q669L1</accession>
<organism>
    <name type="scientific">Yersinia pseudotuberculosis serotype I (strain IP32953)</name>
    <dbReference type="NCBI Taxonomy" id="273123"/>
    <lineage>
        <taxon>Bacteria</taxon>
        <taxon>Pseudomonadati</taxon>
        <taxon>Pseudomonadota</taxon>
        <taxon>Gammaproteobacteria</taxon>
        <taxon>Enterobacterales</taxon>
        <taxon>Yersiniaceae</taxon>
        <taxon>Yersinia</taxon>
    </lineage>
</organism>
<feature type="chain" id="PRO_1000056450" description="Beta-ketoacyl-[acyl-carrier-protein] synthase III">
    <location>
        <begin position="1"/>
        <end position="316"/>
    </location>
</feature>
<feature type="region of interest" description="ACP-binding" evidence="1">
    <location>
        <begin position="244"/>
        <end position="248"/>
    </location>
</feature>
<feature type="active site" evidence="1">
    <location>
        <position position="112"/>
    </location>
</feature>
<feature type="active site" evidence="1">
    <location>
        <position position="243"/>
    </location>
</feature>
<feature type="active site" evidence="1">
    <location>
        <position position="273"/>
    </location>
</feature>
<name>FABH_YERPS</name>
<sequence length="316" mass="33738">MYTKILGTGSYLPVQVRSNADLEKMVDTSDEWIVTRTGIRERRIAGLDETVATMGFQAAEKALEMAGIDKDDIGLIIVATTSSSHAFPSSACQVQRMLGIKDAASFDLAAACAGFTYALSVADQYVKSGAVKHAIVIGSDVLSRALDPEDRGTIILFGDGAGAVVLGASEQPGIMSTHLHADGRYGELLALPYPDRQQDQPAYVTMAGNEVFKVAVTELAHIVDETLQANNLDRTALDWLVPHQANLRIISATAKKLGMGMDKVVITLDRHGNTSAASVPSAFDEAVRDGRIQRGQLVLLEAFGGGFTWGSALVRF</sequence>
<reference key="1">
    <citation type="journal article" date="2004" name="Proc. Natl. Acad. Sci. U.S.A.">
        <title>Insights into the evolution of Yersinia pestis through whole-genome comparison with Yersinia pseudotuberculosis.</title>
        <authorList>
            <person name="Chain P.S.G."/>
            <person name="Carniel E."/>
            <person name="Larimer F.W."/>
            <person name="Lamerdin J."/>
            <person name="Stoutland P.O."/>
            <person name="Regala W.M."/>
            <person name="Georgescu A.M."/>
            <person name="Vergez L.M."/>
            <person name="Land M.L."/>
            <person name="Motin V.L."/>
            <person name="Brubaker R.R."/>
            <person name="Fowler J."/>
            <person name="Hinnebusch J."/>
            <person name="Marceau M."/>
            <person name="Medigue C."/>
            <person name="Simonet M."/>
            <person name="Chenal-Francisque V."/>
            <person name="Souza B."/>
            <person name="Dacheux D."/>
            <person name="Elliott J.M."/>
            <person name="Derbise A."/>
            <person name="Hauser L.J."/>
            <person name="Garcia E."/>
        </authorList>
    </citation>
    <scope>NUCLEOTIDE SEQUENCE [LARGE SCALE GENOMIC DNA]</scope>
    <source>
        <strain>IP32953</strain>
    </source>
</reference>
<dbReference type="EC" id="2.3.1.180" evidence="1"/>
<dbReference type="EMBL" id="BX936398">
    <property type="protein sequence ID" value="CAH21711.1"/>
    <property type="molecule type" value="Genomic_DNA"/>
</dbReference>
<dbReference type="RefSeq" id="WP_002210933.1">
    <property type="nucleotide sequence ID" value="NZ_CP009712.1"/>
</dbReference>
<dbReference type="SMR" id="Q669L1"/>
<dbReference type="KEGG" id="ypo:BZ17_4163"/>
<dbReference type="KEGG" id="yps:YPTB2473"/>
<dbReference type="PATRIC" id="fig|273123.14.peg.4386"/>
<dbReference type="UniPathway" id="UPA00094"/>
<dbReference type="Proteomes" id="UP000001011">
    <property type="component" value="Chromosome"/>
</dbReference>
<dbReference type="GO" id="GO:0005737">
    <property type="term" value="C:cytoplasm"/>
    <property type="evidence" value="ECO:0007669"/>
    <property type="project" value="UniProtKB-SubCell"/>
</dbReference>
<dbReference type="GO" id="GO:0004315">
    <property type="term" value="F:3-oxoacyl-[acyl-carrier-protein] synthase activity"/>
    <property type="evidence" value="ECO:0007669"/>
    <property type="project" value="InterPro"/>
</dbReference>
<dbReference type="GO" id="GO:0033818">
    <property type="term" value="F:beta-ketoacyl-acyl-carrier-protein synthase III activity"/>
    <property type="evidence" value="ECO:0007669"/>
    <property type="project" value="UniProtKB-UniRule"/>
</dbReference>
<dbReference type="GO" id="GO:0006633">
    <property type="term" value="P:fatty acid biosynthetic process"/>
    <property type="evidence" value="ECO:0007669"/>
    <property type="project" value="UniProtKB-UniRule"/>
</dbReference>
<dbReference type="CDD" id="cd00830">
    <property type="entry name" value="KAS_III"/>
    <property type="match status" value="1"/>
</dbReference>
<dbReference type="FunFam" id="3.40.47.10:FF:000004">
    <property type="entry name" value="3-oxoacyl-[acyl-carrier-protein] synthase 3"/>
    <property type="match status" value="1"/>
</dbReference>
<dbReference type="Gene3D" id="3.40.47.10">
    <property type="match status" value="1"/>
</dbReference>
<dbReference type="HAMAP" id="MF_01815">
    <property type="entry name" value="FabH"/>
    <property type="match status" value="1"/>
</dbReference>
<dbReference type="InterPro" id="IPR013747">
    <property type="entry name" value="ACP_syn_III_C"/>
</dbReference>
<dbReference type="InterPro" id="IPR013751">
    <property type="entry name" value="ACP_syn_III_N"/>
</dbReference>
<dbReference type="InterPro" id="IPR004655">
    <property type="entry name" value="FabH"/>
</dbReference>
<dbReference type="InterPro" id="IPR016039">
    <property type="entry name" value="Thiolase-like"/>
</dbReference>
<dbReference type="NCBIfam" id="TIGR00747">
    <property type="entry name" value="fabH"/>
    <property type="match status" value="1"/>
</dbReference>
<dbReference type="NCBIfam" id="NF006829">
    <property type="entry name" value="PRK09352.1"/>
    <property type="match status" value="1"/>
</dbReference>
<dbReference type="PANTHER" id="PTHR43091">
    <property type="entry name" value="3-OXOACYL-[ACYL-CARRIER-PROTEIN] SYNTHASE"/>
    <property type="match status" value="1"/>
</dbReference>
<dbReference type="PANTHER" id="PTHR43091:SF1">
    <property type="entry name" value="BETA-KETOACYL-[ACYL-CARRIER-PROTEIN] SYNTHASE III, CHLOROPLASTIC"/>
    <property type="match status" value="1"/>
</dbReference>
<dbReference type="Pfam" id="PF08545">
    <property type="entry name" value="ACP_syn_III"/>
    <property type="match status" value="1"/>
</dbReference>
<dbReference type="Pfam" id="PF08541">
    <property type="entry name" value="ACP_syn_III_C"/>
    <property type="match status" value="1"/>
</dbReference>
<dbReference type="SUPFAM" id="SSF53901">
    <property type="entry name" value="Thiolase-like"/>
    <property type="match status" value="1"/>
</dbReference>
<proteinExistence type="inferred from homology"/>